<feature type="chain" id="PRO_1000017740" description="Small ribosomal subunit protein eS24">
    <location>
        <begin position="1"/>
        <end position="102"/>
    </location>
</feature>
<evidence type="ECO:0000255" key="1">
    <source>
        <dbReference type="HAMAP-Rule" id="MF_00545"/>
    </source>
</evidence>
<evidence type="ECO:0000305" key="2"/>
<keyword id="KW-0687">Ribonucleoprotein</keyword>
<keyword id="KW-0689">Ribosomal protein</keyword>
<dbReference type="EMBL" id="CP000300">
    <property type="protein sequence ID" value="ABE53143.1"/>
    <property type="molecule type" value="Genomic_DNA"/>
</dbReference>
<dbReference type="RefSeq" id="WP_011500279.1">
    <property type="nucleotide sequence ID" value="NC_007955.1"/>
</dbReference>
<dbReference type="SMR" id="Q12TT3"/>
<dbReference type="STRING" id="259564.Mbur_2283"/>
<dbReference type="GeneID" id="3997237"/>
<dbReference type="KEGG" id="mbu:Mbur_2283"/>
<dbReference type="HOGENOM" id="CLU_107248_3_1_2"/>
<dbReference type="OrthoDB" id="27533at2157"/>
<dbReference type="Proteomes" id="UP000001979">
    <property type="component" value="Chromosome"/>
</dbReference>
<dbReference type="GO" id="GO:1990904">
    <property type="term" value="C:ribonucleoprotein complex"/>
    <property type="evidence" value="ECO:0007669"/>
    <property type="project" value="UniProtKB-KW"/>
</dbReference>
<dbReference type="GO" id="GO:0005840">
    <property type="term" value="C:ribosome"/>
    <property type="evidence" value="ECO:0007669"/>
    <property type="project" value="UniProtKB-KW"/>
</dbReference>
<dbReference type="GO" id="GO:0003735">
    <property type="term" value="F:structural constituent of ribosome"/>
    <property type="evidence" value="ECO:0007669"/>
    <property type="project" value="InterPro"/>
</dbReference>
<dbReference type="GO" id="GO:0006412">
    <property type="term" value="P:translation"/>
    <property type="evidence" value="ECO:0007669"/>
    <property type="project" value="UniProtKB-UniRule"/>
</dbReference>
<dbReference type="Gene3D" id="3.30.70.330">
    <property type="match status" value="1"/>
</dbReference>
<dbReference type="HAMAP" id="MF_00545">
    <property type="entry name" value="Ribosomal_eS24"/>
    <property type="match status" value="1"/>
</dbReference>
<dbReference type="InterPro" id="IPR012677">
    <property type="entry name" value="Nucleotide-bd_a/b_plait_sf"/>
</dbReference>
<dbReference type="InterPro" id="IPR001976">
    <property type="entry name" value="Ribosomal_eS24"/>
</dbReference>
<dbReference type="InterPro" id="IPR012678">
    <property type="entry name" value="Ribosomal_uL23/eL15/eS24_sf"/>
</dbReference>
<dbReference type="Pfam" id="PF01282">
    <property type="entry name" value="Ribosomal_S24e"/>
    <property type="match status" value="1"/>
</dbReference>
<dbReference type="SUPFAM" id="SSF54189">
    <property type="entry name" value="Ribosomal proteins S24e, L23 and L15e"/>
    <property type="match status" value="1"/>
</dbReference>
<protein>
    <recommendedName>
        <fullName evidence="1">Small ribosomal subunit protein eS24</fullName>
    </recommendedName>
    <alternativeName>
        <fullName evidence="2">30S ribosomal protein S24e</fullName>
    </alternativeName>
</protein>
<gene>
    <name evidence="1" type="primary">rps24e</name>
    <name type="ordered locus">Mbur_2283</name>
</gene>
<reference key="1">
    <citation type="journal article" date="2009" name="ISME J.">
        <title>The genome sequence of the psychrophilic archaeon, Methanococcoides burtonii: the role of genome evolution in cold adaptation.</title>
        <authorList>
            <person name="Allen M.A."/>
            <person name="Lauro F.M."/>
            <person name="Williams T.J."/>
            <person name="Burg D."/>
            <person name="Siddiqui K.S."/>
            <person name="De Francisci D."/>
            <person name="Chong K.W."/>
            <person name="Pilak O."/>
            <person name="Chew H.H."/>
            <person name="De Maere M.Z."/>
            <person name="Ting L."/>
            <person name="Katrib M."/>
            <person name="Ng C."/>
            <person name="Sowers K.R."/>
            <person name="Galperin M.Y."/>
            <person name="Anderson I.J."/>
            <person name="Ivanova N."/>
            <person name="Dalin E."/>
            <person name="Martinez M."/>
            <person name="Lapidus A."/>
            <person name="Hauser L."/>
            <person name="Land M."/>
            <person name="Thomas T."/>
            <person name="Cavicchioli R."/>
        </authorList>
    </citation>
    <scope>NUCLEOTIDE SEQUENCE [LARGE SCALE GENOMIC DNA]</scope>
    <source>
        <strain>DSM 6242 / NBRC 107633 / OCM 468 / ACE-M</strain>
    </source>
</reference>
<accession>Q12TT3</accession>
<sequence length="102" mass="11516">MDINIIEDKNNALLNRHEVKFDATFKGSTPSRLDVRGKLAAMLNVPLELVILQKFENTYGMSAANGYAKIYEDAARMKVVEKEYVLKRNELPEAEVVEEAGE</sequence>
<proteinExistence type="inferred from homology"/>
<organism>
    <name type="scientific">Methanococcoides burtonii (strain DSM 6242 / NBRC 107633 / OCM 468 / ACE-M)</name>
    <dbReference type="NCBI Taxonomy" id="259564"/>
    <lineage>
        <taxon>Archaea</taxon>
        <taxon>Methanobacteriati</taxon>
        <taxon>Methanobacteriota</taxon>
        <taxon>Stenosarchaea group</taxon>
        <taxon>Methanomicrobia</taxon>
        <taxon>Methanosarcinales</taxon>
        <taxon>Methanosarcinaceae</taxon>
        <taxon>Methanococcoides</taxon>
    </lineage>
</organism>
<comment type="similarity">
    <text evidence="1">Belongs to the eukaryotic ribosomal protein eS24 family.</text>
</comment>
<name>RS24_METBU</name>